<comment type="function">
    <text evidence="1">Catalyzes the oxidation of either pyridoxine 5'-phosphate (PNP) or pyridoxamine 5'-phosphate (PMP) into pyridoxal 5'-phosphate (PLP).</text>
</comment>
<comment type="catalytic activity">
    <reaction evidence="1">
        <text>pyridoxamine 5'-phosphate + O2 + H2O = pyridoxal 5'-phosphate + H2O2 + NH4(+)</text>
        <dbReference type="Rhea" id="RHEA:15817"/>
        <dbReference type="ChEBI" id="CHEBI:15377"/>
        <dbReference type="ChEBI" id="CHEBI:15379"/>
        <dbReference type="ChEBI" id="CHEBI:16240"/>
        <dbReference type="ChEBI" id="CHEBI:28938"/>
        <dbReference type="ChEBI" id="CHEBI:58451"/>
        <dbReference type="ChEBI" id="CHEBI:597326"/>
        <dbReference type="EC" id="1.4.3.5"/>
    </reaction>
</comment>
<comment type="catalytic activity">
    <reaction evidence="1">
        <text>pyridoxine 5'-phosphate + O2 = pyridoxal 5'-phosphate + H2O2</text>
        <dbReference type="Rhea" id="RHEA:15149"/>
        <dbReference type="ChEBI" id="CHEBI:15379"/>
        <dbReference type="ChEBI" id="CHEBI:16240"/>
        <dbReference type="ChEBI" id="CHEBI:58589"/>
        <dbReference type="ChEBI" id="CHEBI:597326"/>
        <dbReference type="EC" id="1.4.3.5"/>
    </reaction>
</comment>
<comment type="cofactor">
    <cofactor evidence="1">
        <name>FMN</name>
        <dbReference type="ChEBI" id="CHEBI:58210"/>
    </cofactor>
    <text evidence="1">Binds 1 FMN per subunit.</text>
</comment>
<comment type="pathway">
    <text evidence="1">Cofactor metabolism; pyridoxal 5'-phosphate salvage; pyridoxal 5'-phosphate from pyridoxamine 5'-phosphate: step 1/1.</text>
</comment>
<comment type="pathway">
    <text evidence="1">Cofactor metabolism; pyridoxal 5'-phosphate salvage; pyridoxal 5'-phosphate from pyridoxine 5'-phosphate: step 1/1.</text>
</comment>
<comment type="subunit">
    <text evidence="1">Homodimer.</text>
</comment>
<comment type="similarity">
    <text evidence="1">Belongs to the pyridoxamine 5'-phosphate oxidase family.</text>
</comment>
<reference key="1">
    <citation type="submission" date="2009-02" db="EMBL/GenBank/DDBJ databases">
        <title>Vibrio splendidus str. LGP32 complete genome.</title>
        <authorList>
            <person name="Mazel D."/>
            <person name="Le Roux F."/>
        </authorList>
    </citation>
    <scope>NUCLEOTIDE SEQUENCE [LARGE SCALE GENOMIC DNA]</scope>
    <source>
        <strain>LGP32</strain>
    </source>
</reference>
<feature type="chain" id="PRO_1000186346" description="Pyridoxine/pyridoxamine 5'-phosphate oxidase">
    <location>
        <begin position="1"/>
        <end position="211"/>
    </location>
</feature>
<feature type="binding site" evidence="1">
    <location>
        <begin position="7"/>
        <end position="10"/>
    </location>
    <ligand>
        <name>substrate</name>
    </ligand>
</feature>
<feature type="binding site" evidence="1">
    <location>
        <begin position="60"/>
        <end position="65"/>
    </location>
    <ligand>
        <name>FMN</name>
        <dbReference type="ChEBI" id="CHEBI:58210"/>
    </ligand>
</feature>
<feature type="binding site" evidence="1">
    <location>
        <position position="65"/>
    </location>
    <ligand>
        <name>substrate</name>
    </ligand>
</feature>
<feature type="binding site" evidence="1">
    <location>
        <begin position="75"/>
        <end position="76"/>
    </location>
    <ligand>
        <name>FMN</name>
        <dbReference type="ChEBI" id="CHEBI:58210"/>
    </ligand>
</feature>
<feature type="binding site" evidence="1">
    <location>
        <position position="81"/>
    </location>
    <ligand>
        <name>FMN</name>
        <dbReference type="ChEBI" id="CHEBI:58210"/>
    </ligand>
</feature>
<feature type="binding site" evidence="1">
    <location>
        <position position="82"/>
    </location>
    <ligand>
        <name>FMN</name>
        <dbReference type="ChEBI" id="CHEBI:58210"/>
    </ligand>
</feature>
<feature type="binding site" evidence="1">
    <location>
        <position position="104"/>
    </location>
    <ligand>
        <name>FMN</name>
        <dbReference type="ChEBI" id="CHEBI:58210"/>
    </ligand>
</feature>
<feature type="binding site" evidence="1">
    <location>
        <position position="122"/>
    </location>
    <ligand>
        <name>substrate</name>
    </ligand>
</feature>
<feature type="binding site" evidence="1">
    <location>
        <position position="126"/>
    </location>
    <ligand>
        <name>substrate</name>
    </ligand>
</feature>
<feature type="binding site" evidence="1">
    <location>
        <position position="130"/>
    </location>
    <ligand>
        <name>substrate</name>
    </ligand>
</feature>
<feature type="binding site" evidence="1">
    <location>
        <begin position="139"/>
        <end position="140"/>
    </location>
    <ligand>
        <name>FMN</name>
        <dbReference type="ChEBI" id="CHEBI:58210"/>
    </ligand>
</feature>
<feature type="binding site" evidence="1">
    <location>
        <position position="184"/>
    </location>
    <ligand>
        <name>FMN</name>
        <dbReference type="ChEBI" id="CHEBI:58210"/>
    </ligand>
</feature>
<feature type="binding site" evidence="1">
    <location>
        <begin position="190"/>
        <end position="192"/>
    </location>
    <ligand>
        <name>substrate</name>
    </ligand>
</feature>
<feature type="binding site" evidence="1">
    <location>
        <position position="194"/>
    </location>
    <ligand>
        <name>FMN</name>
        <dbReference type="ChEBI" id="CHEBI:58210"/>
    </ligand>
</feature>
<evidence type="ECO:0000255" key="1">
    <source>
        <dbReference type="HAMAP-Rule" id="MF_01629"/>
    </source>
</evidence>
<keyword id="KW-0285">Flavoprotein</keyword>
<keyword id="KW-0288">FMN</keyword>
<keyword id="KW-0560">Oxidoreductase</keyword>
<keyword id="KW-0664">Pyridoxine biosynthesis</keyword>
<protein>
    <recommendedName>
        <fullName evidence="1">Pyridoxine/pyridoxamine 5'-phosphate oxidase</fullName>
        <ecNumber evidence="1">1.4.3.5</ecNumber>
    </recommendedName>
    <alternativeName>
        <fullName evidence="1">PNP/PMP oxidase</fullName>
        <shortName evidence="1">PNPOx</shortName>
    </alternativeName>
    <alternativeName>
        <fullName evidence="1">Pyridoxal 5'-phosphate synthase</fullName>
    </alternativeName>
</protein>
<proteinExistence type="inferred from homology"/>
<gene>
    <name evidence="1" type="primary">pdxH</name>
    <name type="ordered locus">VS_II0011</name>
</gene>
<organism>
    <name type="scientific">Vibrio atlanticus (strain LGP32)</name>
    <name type="common">Vibrio splendidus (strain Mel32)</name>
    <dbReference type="NCBI Taxonomy" id="575788"/>
    <lineage>
        <taxon>Bacteria</taxon>
        <taxon>Pseudomonadati</taxon>
        <taxon>Pseudomonadota</taxon>
        <taxon>Gammaproteobacteria</taxon>
        <taxon>Vibrionales</taxon>
        <taxon>Vibrionaceae</taxon>
        <taxon>Vibrio</taxon>
    </lineage>
</organism>
<sequence length="211" mass="24367">MELTDIRREYAKGGLRRKDLAADPIEQFNLWLEQAIEAKLTDPTAMTVATVDENGQPFQRIVLLKNVDKDGFVFYTNLGSRKAHQLEHNSKISLHFPWHPLERQVHITGTAEKLTAMENMKYFSSRPKESQLAAIASKQSSRISARGILEGKYLELKQKFAKGEIPVPSFWGGFRVRVDSIEFWQGGEHRLHDRFLFSRQDSRWDIDRLAP</sequence>
<dbReference type="EC" id="1.4.3.5" evidence="1"/>
<dbReference type="EMBL" id="FM954973">
    <property type="protein sequence ID" value="CAV25190.1"/>
    <property type="molecule type" value="Genomic_DNA"/>
</dbReference>
<dbReference type="SMR" id="B7VPY4"/>
<dbReference type="STRING" id="575788.VS_II0011"/>
<dbReference type="KEGG" id="vsp:VS_II0011"/>
<dbReference type="PATRIC" id="fig|575788.5.peg.11"/>
<dbReference type="eggNOG" id="COG0259">
    <property type="taxonomic scope" value="Bacteria"/>
</dbReference>
<dbReference type="HOGENOM" id="CLU_032263_2_2_6"/>
<dbReference type="UniPathway" id="UPA01068">
    <property type="reaction ID" value="UER00304"/>
</dbReference>
<dbReference type="UniPathway" id="UPA01068">
    <property type="reaction ID" value="UER00305"/>
</dbReference>
<dbReference type="Proteomes" id="UP000009100">
    <property type="component" value="Chromosome 2"/>
</dbReference>
<dbReference type="GO" id="GO:0010181">
    <property type="term" value="F:FMN binding"/>
    <property type="evidence" value="ECO:0007669"/>
    <property type="project" value="UniProtKB-UniRule"/>
</dbReference>
<dbReference type="GO" id="GO:0004733">
    <property type="term" value="F:pyridoxamine phosphate oxidase activity"/>
    <property type="evidence" value="ECO:0007669"/>
    <property type="project" value="UniProtKB-UniRule"/>
</dbReference>
<dbReference type="GO" id="GO:0008615">
    <property type="term" value="P:pyridoxine biosynthetic process"/>
    <property type="evidence" value="ECO:0007669"/>
    <property type="project" value="UniProtKB-KW"/>
</dbReference>
<dbReference type="Gene3D" id="2.30.110.10">
    <property type="entry name" value="Electron Transport, Fmn-binding Protein, Chain A"/>
    <property type="match status" value="1"/>
</dbReference>
<dbReference type="HAMAP" id="MF_01629">
    <property type="entry name" value="PdxH"/>
    <property type="match status" value="1"/>
</dbReference>
<dbReference type="InterPro" id="IPR000659">
    <property type="entry name" value="Pyridox_Oxase"/>
</dbReference>
<dbReference type="InterPro" id="IPR019740">
    <property type="entry name" value="Pyridox_Oxase_CS"/>
</dbReference>
<dbReference type="InterPro" id="IPR011576">
    <property type="entry name" value="Pyridox_Oxase_N"/>
</dbReference>
<dbReference type="InterPro" id="IPR019576">
    <property type="entry name" value="Pyridoxamine_oxidase_dimer_C"/>
</dbReference>
<dbReference type="InterPro" id="IPR012349">
    <property type="entry name" value="Split_barrel_FMN-bd"/>
</dbReference>
<dbReference type="NCBIfam" id="TIGR00558">
    <property type="entry name" value="pdxH"/>
    <property type="match status" value="1"/>
</dbReference>
<dbReference type="NCBIfam" id="NF004231">
    <property type="entry name" value="PRK05679.1"/>
    <property type="match status" value="1"/>
</dbReference>
<dbReference type="PANTHER" id="PTHR10851:SF0">
    <property type="entry name" value="PYRIDOXINE-5'-PHOSPHATE OXIDASE"/>
    <property type="match status" value="1"/>
</dbReference>
<dbReference type="PANTHER" id="PTHR10851">
    <property type="entry name" value="PYRIDOXINE-5-PHOSPHATE OXIDASE"/>
    <property type="match status" value="1"/>
</dbReference>
<dbReference type="Pfam" id="PF10590">
    <property type="entry name" value="PNP_phzG_C"/>
    <property type="match status" value="1"/>
</dbReference>
<dbReference type="Pfam" id="PF01243">
    <property type="entry name" value="PNPOx_N"/>
    <property type="match status" value="1"/>
</dbReference>
<dbReference type="PIRSF" id="PIRSF000190">
    <property type="entry name" value="Pyd_amn-ph_oxd"/>
    <property type="match status" value="1"/>
</dbReference>
<dbReference type="SUPFAM" id="SSF50475">
    <property type="entry name" value="FMN-binding split barrel"/>
    <property type="match status" value="1"/>
</dbReference>
<dbReference type="PROSITE" id="PS01064">
    <property type="entry name" value="PYRIDOX_OXIDASE"/>
    <property type="match status" value="1"/>
</dbReference>
<name>PDXH_VIBA3</name>
<accession>B7VPY4</accession>